<dbReference type="EMBL" id="AM920689">
    <property type="protein sequence ID" value="CAP52553.1"/>
    <property type="molecule type" value="Genomic_DNA"/>
</dbReference>
<dbReference type="SMR" id="B0RY33"/>
<dbReference type="KEGG" id="xca:xcc-b100_3188"/>
<dbReference type="HOGENOM" id="CLU_095424_4_0_6"/>
<dbReference type="Proteomes" id="UP000001188">
    <property type="component" value="Chromosome"/>
</dbReference>
<dbReference type="GO" id="GO:0022625">
    <property type="term" value="C:cytosolic large ribosomal subunit"/>
    <property type="evidence" value="ECO:0007669"/>
    <property type="project" value="TreeGrafter"/>
</dbReference>
<dbReference type="GO" id="GO:0003735">
    <property type="term" value="F:structural constituent of ribosome"/>
    <property type="evidence" value="ECO:0007669"/>
    <property type="project" value="InterPro"/>
</dbReference>
<dbReference type="GO" id="GO:0006412">
    <property type="term" value="P:translation"/>
    <property type="evidence" value="ECO:0007669"/>
    <property type="project" value="UniProtKB-UniRule"/>
</dbReference>
<dbReference type="FunFam" id="2.40.50.100:FF:000001">
    <property type="entry name" value="50S ribosomal protein L27"/>
    <property type="match status" value="1"/>
</dbReference>
<dbReference type="Gene3D" id="2.40.50.100">
    <property type="match status" value="1"/>
</dbReference>
<dbReference type="HAMAP" id="MF_00539">
    <property type="entry name" value="Ribosomal_bL27"/>
    <property type="match status" value="1"/>
</dbReference>
<dbReference type="InterPro" id="IPR001684">
    <property type="entry name" value="Ribosomal_bL27"/>
</dbReference>
<dbReference type="InterPro" id="IPR018261">
    <property type="entry name" value="Ribosomal_bL27_CS"/>
</dbReference>
<dbReference type="NCBIfam" id="TIGR00062">
    <property type="entry name" value="L27"/>
    <property type="match status" value="1"/>
</dbReference>
<dbReference type="PANTHER" id="PTHR15893:SF0">
    <property type="entry name" value="LARGE RIBOSOMAL SUBUNIT PROTEIN BL27M"/>
    <property type="match status" value="1"/>
</dbReference>
<dbReference type="PANTHER" id="PTHR15893">
    <property type="entry name" value="RIBOSOMAL PROTEIN L27"/>
    <property type="match status" value="1"/>
</dbReference>
<dbReference type="Pfam" id="PF01016">
    <property type="entry name" value="Ribosomal_L27"/>
    <property type="match status" value="1"/>
</dbReference>
<dbReference type="PRINTS" id="PR00063">
    <property type="entry name" value="RIBOSOMALL27"/>
</dbReference>
<dbReference type="SUPFAM" id="SSF110324">
    <property type="entry name" value="Ribosomal L27 protein-like"/>
    <property type="match status" value="1"/>
</dbReference>
<dbReference type="PROSITE" id="PS00831">
    <property type="entry name" value="RIBOSOMAL_L27"/>
    <property type="match status" value="1"/>
</dbReference>
<gene>
    <name evidence="1" type="primary">rpmA</name>
    <name type="ordered locus">xcc-b100_3188</name>
</gene>
<reference key="1">
    <citation type="journal article" date="2008" name="J. Biotechnol.">
        <title>The genome of Xanthomonas campestris pv. campestris B100 and its use for the reconstruction of metabolic pathways involved in xanthan biosynthesis.</title>
        <authorList>
            <person name="Vorhoelter F.-J."/>
            <person name="Schneiker S."/>
            <person name="Goesmann A."/>
            <person name="Krause L."/>
            <person name="Bekel T."/>
            <person name="Kaiser O."/>
            <person name="Linke B."/>
            <person name="Patschkowski T."/>
            <person name="Rueckert C."/>
            <person name="Schmid J."/>
            <person name="Sidhu V.K."/>
            <person name="Sieber V."/>
            <person name="Tauch A."/>
            <person name="Watt S.A."/>
            <person name="Weisshaar B."/>
            <person name="Becker A."/>
            <person name="Niehaus K."/>
            <person name="Puehler A."/>
        </authorList>
    </citation>
    <scope>NUCLEOTIDE SEQUENCE [LARGE SCALE GENOMIC DNA]</scope>
    <source>
        <strain>B100</strain>
    </source>
</reference>
<feature type="chain" id="PRO_1000128826" description="Large ribosomal subunit protein bL27">
    <location>
        <begin position="1"/>
        <end position="86"/>
    </location>
</feature>
<sequence length="86" mass="9114">MAHKKGVGSSRNGRDSNPKYLGVKIFGGQAIDAGNIIVRQRGTQFHPGAGVGLGRDHTLFALVNGKVEFTTKGPKKRRTVSVVAEA</sequence>
<keyword id="KW-0687">Ribonucleoprotein</keyword>
<keyword id="KW-0689">Ribosomal protein</keyword>
<organism>
    <name type="scientific">Xanthomonas campestris pv. campestris (strain B100)</name>
    <dbReference type="NCBI Taxonomy" id="509169"/>
    <lineage>
        <taxon>Bacteria</taxon>
        <taxon>Pseudomonadati</taxon>
        <taxon>Pseudomonadota</taxon>
        <taxon>Gammaproteobacteria</taxon>
        <taxon>Lysobacterales</taxon>
        <taxon>Lysobacteraceae</taxon>
        <taxon>Xanthomonas</taxon>
    </lineage>
</organism>
<proteinExistence type="inferred from homology"/>
<evidence type="ECO:0000255" key="1">
    <source>
        <dbReference type="HAMAP-Rule" id="MF_00539"/>
    </source>
</evidence>
<evidence type="ECO:0000305" key="2"/>
<accession>B0RY33</accession>
<protein>
    <recommendedName>
        <fullName evidence="1">Large ribosomal subunit protein bL27</fullName>
    </recommendedName>
    <alternativeName>
        <fullName evidence="2">50S ribosomal protein L27</fullName>
    </alternativeName>
</protein>
<name>RL27_XANCB</name>
<comment type="similarity">
    <text evidence="1">Belongs to the bacterial ribosomal protein bL27 family.</text>
</comment>